<gene>
    <name evidence="1" type="primary">groEL</name>
    <name evidence="1" type="synonym">groL</name>
    <name type="ordered locus">SPG_1818</name>
</gene>
<evidence type="ECO:0000255" key="1">
    <source>
        <dbReference type="HAMAP-Rule" id="MF_00600"/>
    </source>
</evidence>
<organism>
    <name type="scientific">Streptococcus pneumoniae serotype 19F (strain G54)</name>
    <dbReference type="NCBI Taxonomy" id="512566"/>
    <lineage>
        <taxon>Bacteria</taxon>
        <taxon>Bacillati</taxon>
        <taxon>Bacillota</taxon>
        <taxon>Bacilli</taxon>
        <taxon>Lactobacillales</taxon>
        <taxon>Streptococcaceae</taxon>
        <taxon>Streptococcus</taxon>
    </lineage>
</organism>
<keyword id="KW-0067">ATP-binding</keyword>
<keyword id="KW-0143">Chaperone</keyword>
<keyword id="KW-0963">Cytoplasm</keyword>
<keyword id="KW-0413">Isomerase</keyword>
<keyword id="KW-0547">Nucleotide-binding</keyword>
<accession>B5E223</accession>
<name>CH60_STRP4</name>
<reference key="1">
    <citation type="journal article" date="2001" name="Microb. Drug Resist.">
        <title>Annotated draft genomic sequence from a Streptococcus pneumoniae type 19F clinical isolate.</title>
        <authorList>
            <person name="Dopazo J."/>
            <person name="Mendoza A."/>
            <person name="Herrero J."/>
            <person name="Caldara F."/>
            <person name="Humbert Y."/>
            <person name="Friedli L."/>
            <person name="Guerrier M."/>
            <person name="Grand-Schenk E."/>
            <person name="Gandin C."/>
            <person name="de Francesco M."/>
            <person name="Polissi A."/>
            <person name="Buell G."/>
            <person name="Feger G."/>
            <person name="Garcia E."/>
            <person name="Peitsch M."/>
            <person name="Garcia-Bustos J.F."/>
        </authorList>
    </citation>
    <scope>NUCLEOTIDE SEQUENCE [LARGE SCALE GENOMIC DNA]</scope>
    <source>
        <strain>G54</strain>
    </source>
</reference>
<reference key="2">
    <citation type="submission" date="2008-03" db="EMBL/GenBank/DDBJ databases">
        <title>Pneumococcal beta glucoside metabolism investigated by whole genome comparison.</title>
        <authorList>
            <person name="Mulas L."/>
            <person name="Trappetti C."/>
            <person name="Hakenbeck R."/>
            <person name="Iannelli F."/>
            <person name="Pozzi G."/>
            <person name="Davidsen T.M."/>
            <person name="Tettelin H."/>
            <person name="Oggioni M."/>
        </authorList>
    </citation>
    <scope>NUCLEOTIDE SEQUENCE [LARGE SCALE GENOMIC DNA]</scope>
    <source>
        <strain>G54</strain>
    </source>
</reference>
<comment type="function">
    <text evidence="1">Together with its co-chaperonin GroES, plays an essential role in assisting protein folding. The GroEL-GroES system forms a nano-cage that allows encapsulation of the non-native substrate proteins and provides a physical environment optimized to promote and accelerate protein folding.</text>
</comment>
<comment type="catalytic activity">
    <reaction evidence="1">
        <text>ATP + H2O + a folded polypeptide = ADP + phosphate + an unfolded polypeptide.</text>
        <dbReference type="EC" id="5.6.1.7"/>
    </reaction>
</comment>
<comment type="subunit">
    <text evidence="1">Forms a cylinder of 14 subunits composed of two heptameric rings stacked back-to-back. Interacts with the co-chaperonin GroES.</text>
</comment>
<comment type="subcellular location">
    <subcellularLocation>
        <location evidence="1">Cytoplasm</location>
    </subcellularLocation>
</comment>
<comment type="similarity">
    <text evidence="1">Belongs to the chaperonin (HSP60) family.</text>
</comment>
<protein>
    <recommendedName>
        <fullName evidence="1">Chaperonin GroEL</fullName>
        <ecNumber evidence="1">5.6.1.7</ecNumber>
    </recommendedName>
    <alternativeName>
        <fullName evidence="1">60 kDa chaperonin</fullName>
    </alternativeName>
    <alternativeName>
        <fullName evidence="1">Chaperonin-60</fullName>
        <shortName evidence="1">Cpn60</shortName>
    </alternativeName>
</protein>
<feature type="chain" id="PRO_1000130064" description="Chaperonin GroEL">
    <location>
        <begin position="1"/>
        <end position="540"/>
    </location>
</feature>
<feature type="binding site" evidence="1">
    <location>
        <begin position="29"/>
        <end position="32"/>
    </location>
    <ligand>
        <name>ATP</name>
        <dbReference type="ChEBI" id="CHEBI:30616"/>
    </ligand>
</feature>
<feature type="binding site" evidence="1">
    <location>
        <begin position="86"/>
        <end position="90"/>
    </location>
    <ligand>
        <name>ATP</name>
        <dbReference type="ChEBI" id="CHEBI:30616"/>
    </ligand>
</feature>
<feature type="binding site" evidence="1">
    <location>
        <position position="413"/>
    </location>
    <ligand>
        <name>ATP</name>
        <dbReference type="ChEBI" id="CHEBI:30616"/>
    </ligand>
</feature>
<feature type="binding site" evidence="1">
    <location>
        <begin position="476"/>
        <end position="478"/>
    </location>
    <ligand>
        <name>ATP</name>
        <dbReference type="ChEBI" id="CHEBI:30616"/>
    </ligand>
</feature>
<feature type="binding site" evidence="1">
    <location>
        <position position="492"/>
    </location>
    <ligand>
        <name>ATP</name>
        <dbReference type="ChEBI" id="CHEBI:30616"/>
    </ligand>
</feature>
<proteinExistence type="inferred from homology"/>
<sequence>MSKEIKFSSDARSAMVRGVDILADTVKVTLGPKGRNVVLEKSFGSPLITNDGVTIAKEIELEDHFENMGAKLVSEVASKTNDIAGDGTTTATVLTQAIVREGIKNVTAGANPIGIRRGIETAVAAAVEALKNNAIPVANKEAIAQVAAVSSRSEKVGEYISEAMEKVGKDGVITIEESRGMETELEVVEGMQFDRGYLSQYMVTDSEKMVADLENPYILITDKKISNIQEILPLLESILQSNRPLLIIADDVDGEALPTLVLNKIRGTFNVVAVKAPGFGDRRKAMLEDIAILTGGTVITEDLGLELKDATIEALGQAARVTVDKDSTVIVEGAGNPEAISHRVAVIKSQIETTTSEFDREKLQERLAKLSGGVAVIKVGAATETELKEMKLRIEDALNATRAAVEEGIVAGGGTALANVIPAVATLELTGDEATGRNIVLRALEEPVRQIAHNAGFEGSIVIDRLKNAELGIGFNAATGEWVNMIDQGIIDPVKVSRSALQNAASVASLILTTEAVVANKPEPVAPAPAMDPSMMGGMM</sequence>
<dbReference type="EC" id="5.6.1.7" evidence="1"/>
<dbReference type="EMBL" id="CP001015">
    <property type="protein sequence ID" value="ACF56332.1"/>
    <property type="molecule type" value="Genomic_DNA"/>
</dbReference>
<dbReference type="SMR" id="B5E223"/>
<dbReference type="KEGG" id="spx:SPG_1818"/>
<dbReference type="HOGENOM" id="CLU_016503_3_0_9"/>
<dbReference type="GO" id="GO:0005737">
    <property type="term" value="C:cytoplasm"/>
    <property type="evidence" value="ECO:0007669"/>
    <property type="project" value="UniProtKB-SubCell"/>
</dbReference>
<dbReference type="GO" id="GO:0005524">
    <property type="term" value="F:ATP binding"/>
    <property type="evidence" value="ECO:0007669"/>
    <property type="project" value="UniProtKB-UniRule"/>
</dbReference>
<dbReference type="GO" id="GO:0140662">
    <property type="term" value="F:ATP-dependent protein folding chaperone"/>
    <property type="evidence" value="ECO:0007669"/>
    <property type="project" value="InterPro"/>
</dbReference>
<dbReference type="GO" id="GO:0016853">
    <property type="term" value="F:isomerase activity"/>
    <property type="evidence" value="ECO:0007669"/>
    <property type="project" value="UniProtKB-KW"/>
</dbReference>
<dbReference type="GO" id="GO:0051082">
    <property type="term" value="F:unfolded protein binding"/>
    <property type="evidence" value="ECO:0007669"/>
    <property type="project" value="UniProtKB-UniRule"/>
</dbReference>
<dbReference type="GO" id="GO:0042026">
    <property type="term" value="P:protein refolding"/>
    <property type="evidence" value="ECO:0007669"/>
    <property type="project" value="UniProtKB-UniRule"/>
</dbReference>
<dbReference type="CDD" id="cd03344">
    <property type="entry name" value="GroEL"/>
    <property type="match status" value="1"/>
</dbReference>
<dbReference type="FunFam" id="1.10.560.10:FF:000001">
    <property type="entry name" value="60 kDa chaperonin"/>
    <property type="match status" value="1"/>
</dbReference>
<dbReference type="FunFam" id="3.50.7.10:FF:000001">
    <property type="entry name" value="60 kDa chaperonin"/>
    <property type="match status" value="1"/>
</dbReference>
<dbReference type="Gene3D" id="3.50.7.10">
    <property type="entry name" value="GroEL"/>
    <property type="match status" value="1"/>
</dbReference>
<dbReference type="Gene3D" id="1.10.560.10">
    <property type="entry name" value="GroEL-like equatorial domain"/>
    <property type="match status" value="1"/>
</dbReference>
<dbReference type="Gene3D" id="3.30.260.10">
    <property type="entry name" value="TCP-1-like chaperonin intermediate domain"/>
    <property type="match status" value="1"/>
</dbReference>
<dbReference type="HAMAP" id="MF_00600">
    <property type="entry name" value="CH60"/>
    <property type="match status" value="1"/>
</dbReference>
<dbReference type="InterPro" id="IPR018370">
    <property type="entry name" value="Chaperonin_Cpn60_CS"/>
</dbReference>
<dbReference type="InterPro" id="IPR001844">
    <property type="entry name" value="Cpn60/GroEL"/>
</dbReference>
<dbReference type="InterPro" id="IPR002423">
    <property type="entry name" value="Cpn60/GroEL/TCP-1"/>
</dbReference>
<dbReference type="InterPro" id="IPR027409">
    <property type="entry name" value="GroEL-like_apical_dom_sf"/>
</dbReference>
<dbReference type="InterPro" id="IPR027413">
    <property type="entry name" value="GROEL-like_equatorial_sf"/>
</dbReference>
<dbReference type="InterPro" id="IPR027410">
    <property type="entry name" value="TCP-1-like_intermed_sf"/>
</dbReference>
<dbReference type="NCBIfam" id="TIGR02348">
    <property type="entry name" value="GroEL"/>
    <property type="match status" value="1"/>
</dbReference>
<dbReference type="NCBIfam" id="NF000592">
    <property type="entry name" value="PRK00013.1"/>
    <property type="match status" value="1"/>
</dbReference>
<dbReference type="NCBIfam" id="NF009487">
    <property type="entry name" value="PRK12849.1"/>
    <property type="match status" value="1"/>
</dbReference>
<dbReference type="NCBIfam" id="NF009488">
    <property type="entry name" value="PRK12850.1"/>
    <property type="match status" value="1"/>
</dbReference>
<dbReference type="NCBIfam" id="NF009489">
    <property type="entry name" value="PRK12851.1"/>
    <property type="match status" value="1"/>
</dbReference>
<dbReference type="PANTHER" id="PTHR45633">
    <property type="entry name" value="60 KDA HEAT SHOCK PROTEIN, MITOCHONDRIAL"/>
    <property type="match status" value="1"/>
</dbReference>
<dbReference type="Pfam" id="PF00118">
    <property type="entry name" value="Cpn60_TCP1"/>
    <property type="match status" value="1"/>
</dbReference>
<dbReference type="PRINTS" id="PR00298">
    <property type="entry name" value="CHAPERONIN60"/>
</dbReference>
<dbReference type="SUPFAM" id="SSF52029">
    <property type="entry name" value="GroEL apical domain-like"/>
    <property type="match status" value="1"/>
</dbReference>
<dbReference type="SUPFAM" id="SSF48592">
    <property type="entry name" value="GroEL equatorial domain-like"/>
    <property type="match status" value="1"/>
</dbReference>
<dbReference type="SUPFAM" id="SSF54849">
    <property type="entry name" value="GroEL-intermediate domain like"/>
    <property type="match status" value="1"/>
</dbReference>
<dbReference type="PROSITE" id="PS00296">
    <property type="entry name" value="CHAPERONINS_CPN60"/>
    <property type="match status" value="1"/>
</dbReference>